<proteinExistence type="evidence at protein level"/>
<keyword id="KW-0460">Magnesium</keyword>
<keyword id="KW-0479">Metal-binding</keyword>
<keyword id="KW-0547">Nucleotide-binding</keyword>
<keyword id="KW-0548">Nucleotidyltransferase</keyword>
<keyword id="KW-1185">Reference proteome</keyword>
<keyword id="KW-0694">RNA-binding</keyword>
<keyword id="KW-0808">Transferase</keyword>
<keyword id="KW-0819">tRNA processing</keyword>
<keyword id="KW-0820">tRNA-binding</keyword>
<comment type="function">
    <text evidence="2">tRNA nucleotidyltransferase involved in the synthesis of the tRNA CCA terminus. Adds the two cytidine residues to tRNA.</text>
</comment>
<comment type="catalytic activity">
    <reaction evidence="2">
        <text>a tRNA precursor + 2 CTP = a tRNA with a 3' CC end + 2 diphosphate</text>
        <dbReference type="Rhea" id="RHEA:60008"/>
        <dbReference type="Rhea" id="RHEA-COMP:10465"/>
        <dbReference type="Rhea" id="RHEA-COMP:15488"/>
        <dbReference type="ChEBI" id="CHEBI:33019"/>
        <dbReference type="ChEBI" id="CHEBI:37563"/>
        <dbReference type="ChEBI" id="CHEBI:74896"/>
        <dbReference type="ChEBI" id="CHEBI:83069"/>
    </reaction>
    <physiologicalReaction direction="left-to-right" evidence="2">
        <dbReference type="Rhea" id="RHEA:60009"/>
    </physiologicalReaction>
</comment>
<comment type="cofactor">
    <cofactor evidence="1">
        <name>Mg(2+)</name>
        <dbReference type="ChEBI" id="CHEBI:18420"/>
    </cofactor>
</comment>
<comment type="biophysicochemical properties">
    <phDependence>
        <text evidence="2">Optimum pH is 9.5.</text>
    </phDependence>
</comment>
<comment type="similarity">
    <text evidence="4">Belongs to the tRNA nucleotidyltransferase/poly(A) polymerase family.</text>
</comment>
<name>CATNT_HALH5</name>
<evidence type="ECO:0000250" key="1">
    <source>
        <dbReference type="UniProtKB" id="O67911"/>
    </source>
</evidence>
<evidence type="ECO:0000269" key="2">
    <source>
    </source>
</evidence>
<evidence type="ECO:0000303" key="3">
    <source>
    </source>
</evidence>
<evidence type="ECO:0000305" key="4"/>
<evidence type="ECO:0000312" key="5">
    <source>
        <dbReference type="EMBL" id="BAB05403.1"/>
    </source>
</evidence>
<organism>
    <name type="scientific">Halalkalibacterium halodurans (strain ATCC BAA-125 / DSM 18197 / FERM 7344 / JCM 9153 / C-125)</name>
    <name type="common">Bacillus halodurans</name>
    <dbReference type="NCBI Taxonomy" id="272558"/>
    <lineage>
        <taxon>Bacteria</taxon>
        <taxon>Bacillati</taxon>
        <taxon>Bacillota</taxon>
        <taxon>Bacilli</taxon>
        <taxon>Bacillales</taxon>
        <taxon>Bacillaceae</taxon>
        <taxon>Halalkalibacterium (ex Joshi et al. 2022)</taxon>
    </lineage>
</organism>
<protein>
    <recommendedName>
        <fullName evidence="3">CC-adding tRNA nucleotidyltransferase</fullName>
        <shortName evidence="4">C-adding TNT</shortName>
        <ecNumber evidence="2">2.7.7.-</ecNumber>
    </recommendedName>
    <alternativeName>
        <fullName evidence="3">CC-adding enzyme</fullName>
    </alternativeName>
    <alternativeName>
        <fullName evidence="3">NTSFI</fullName>
    </alternativeName>
</protein>
<dbReference type="EC" id="2.7.7.-" evidence="2"/>
<dbReference type="EMBL" id="BA000004">
    <property type="protein sequence ID" value="BAB05403.1"/>
    <property type="molecule type" value="Genomic_DNA"/>
</dbReference>
<dbReference type="PIR" id="D83860">
    <property type="entry name" value="D83860"/>
</dbReference>
<dbReference type="RefSeq" id="WP_010897846.1">
    <property type="nucleotide sequence ID" value="NC_002570.2"/>
</dbReference>
<dbReference type="SMR" id="Q9KC89"/>
<dbReference type="STRING" id="272558.gene:10727582"/>
<dbReference type="GeneID" id="87597302"/>
<dbReference type="KEGG" id="bha:BH1684"/>
<dbReference type="eggNOG" id="COG0617">
    <property type="taxonomic scope" value="Bacteria"/>
</dbReference>
<dbReference type="HOGENOM" id="CLU_015961_3_0_9"/>
<dbReference type="OrthoDB" id="9805698at2"/>
<dbReference type="Proteomes" id="UP000001258">
    <property type="component" value="Chromosome"/>
</dbReference>
<dbReference type="GO" id="GO:0052927">
    <property type="term" value="F:CC tRNA cytidylyltransferase activity"/>
    <property type="evidence" value="ECO:0007669"/>
    <property type="project" value="RHEA"/>
</dbReference>
<dbReference type="GO" id="GO:0046872">
    <property type="term" value="F:metal ion binding"/>
    <property type="evidence" value="ECO:0007669"/>
    <property type="project" value="UniProtKB-KW"/>
</dbReference>
<dbReference type="GO" id="GO:0000166">
    <property type="term" value="F:nucleotide binding"/>
    <property type="evidence" value="ECO:0007669"/>
    <property type="project" value="UniProtKB-KW"/>
</dbReference>
<dbReference type="GO" id="GO:0000049">
    <property type="term" value="F:tRNA binding"/>
    <property type="evidence" value="ECO:0007669"/>
    <property type="project" value="UniProtKB-KW"/>
</dbReference>
<dbReference type="GO" id="GO:0008033">
    <property type="term" value="P:tRNA processing"/>
    <property type="evidence" value="ECO:0007669"/>
    <property type="project" value="UniProtKB-KW"/>
</dbReference>
<dbReference type="CDD" id="cd05398">
    <property type="entry name" value="NT_ClassII-CCAase"/>
    <property type="match status" value="1"/>
</dbReference>
<dbReference type="Gene3D" id="1.10.110.30">
    <property type="match status" value="1"/>
</dbReference>
<dbReference type="Gene3D" id="1.10.246.80">
    <property type="match status" value="1"/>
</dbReference>
<dbReference type="Gene3D" id="1.20.58.560">
    <property type="match status" value="1"/>
</dbReference>
<dbReference type="Gene3D" id="3.30.460.10">
    <property type="entry name" value="Beta Polymerase, domain 2"/>
    <property type="match status" value="1"/>
</dbReference>
<dbReference type="InterPro" id="IPR050264">
    <property type="entry name" value="Bact_CCA-adding_enz_type3_sf"/>
</dbReference>
<dbReference type="InterPro" id="IPR032810">
    <property type="entry name" value="CCA-adding_enz_C"/>
</dbReference>
<dbReference type="InterPro" id="IPR043519">
    <property type="entry name" value="NT_sf"/>
</dbReference>
<dbReference type="InterPro" id="IPR002646">
    <property type="entry name" value="PolA_pol_head_dom"/>
</dbReference>
<dbReference type="InterPro" id="IPR032828">
    <property type="entry name" value="PolyA_RNA-bd"/>
</dbReference>
<dbReference type="NCBIfam" id="NF009814">
    <property type="entry name" value="PRK13299.1"/>
    <property type="match status" value="1"/>
</dbReference>
<dbReference type="PANTHER" id="PTHR46173">
    <property type="entry name" value="CCA TRNA NUCLEOTIDYLTRANSFERASE 1, MITOCHONDRIAL"/>
    <property type="match status" value="1"/>
</dbReference>
<dbReference type="PANTHER" id="PTHR46173:SF1">
    <property type="entry name" value="CCA TRNA NUCLEOTIDYLTRANSFERASE 1, MITOCHONDRIAL"/>
    <property type="match status" value="1"/>
</dbReference>
<dbReference type="Pfam" id="PF01743">
    <property type="entry name" value="PolyA_pol"/>
    <property type="match status" value="1"/>
</dbReference>
<dbReference type="Pfam" id="PF12627">
    <property type="entry name" value="PolyA_pol_RNAbd"/>
    <property type="match status" value="1"/>
</dbReference>
<dbReference type="Pfam" id="PF13735">
    <property type="entry name" value="tRNA_NucTran2_2"/>
    <property type="match status" value="1"/>
</dbReference>
<dbReference type="SUPFAM" id="SSF81301">
    <property type="entry name" value="Nucleotidyltransferase"/>
    <property type="match status" value="1"/>
</dbReference>
<dbReference type="SUPFAM" id="SSF81891">
    <property type="entry name" value="Poly A polymerase C-terminal region-like"/>
    <property type="match status" value="1"/>
</dbReference>
<accession>Q9KC89</accession>
<feature type="chain" id="PRO_0000139029" description="CC-adding tRNA nucleotidyltransferase">
    <location>
        <begin position="1"/>
        <end position="375"/>
    </location>
</feature>
<feature type="binding site" evidence="1">
    <location>
        <begin position="27"/>
        <end position="30"/>
    </location>
    <ligand>
        <name>CTP</name>
        <dbReference type="ChEBI" id="CHEBI:37563"/>
    </ligand>
</feature>
<feature type="binding site" evidence="1">
    <location>
        <position position="40"/>
    </location>
    <ligand>
        <name>Mg(2+)</name>
        <dbReference type="ChEBI" id="CHEBI:18420"/>
    </ligand>
</feature>
<feature type="binding site" evidence="1">
    <location>
        <position position="42"/>
    </location>
    <ligand>
        <name>Mg(2+)</name>
        <dbReference type="ChEBI" id="CHEBI:18420"/>
    </ligand>
</feature>
<feature type="binding site" evidence="1">
    <location>
        <begin position="95"/>
        <end position="96"/>
    </location>
    <ligand>
        <name>CTP</name>
        <dbReference type="ChEBI" id="CHEBI:37563"/>
    </ligand>
</feature>
<feature type="binding site" evidence="1">
    <location>
        <position position="100"/>
    </location>
    <ligand>
        <name>CTP</name>
        <dbReference type="ChEBI" id="CHEBI:37563"/>
    </ligand>
</feature>
<feature type="binding site" evidence="1">
    <location>
        <begin position="137"/>
        <end position="146"/>
    </location>
    <ligand>
        <name>CTP</name>
        <dbReference type="ChEBI" id="CHEBI:37563"/>
    </ligand>
</feature>
<feature type="binding site" evidence="1">
    <location>
        <position position="177"/>
    </location>
    <ligand>
        <name>CTP</name>
        <dbReference type="ChEBI" id="CHEBI:37563"/>
    </ligand>
</feature>
<gene>
    <name evidence="5" type="ordered locus">BH1684</name>
</gene>
<sequence length="375" mass="42113">MDDVIKKGLSIVSELRDHGFEAYIVGGAVRDYHIGRKPKDVDVVTSASPEEIRTLYPHAFQINRQFQTLTVHLQKVAIEVSTLRGGSIEDDLCSRDFTINAMALAMNGDIIDPTGGKTDLENGVIRSFHPEARFKEDPLRMLRAPRFASELGFTVAKGTAEAIKGSCSLLADVAVERVEKELTQLMIGTHRSSGWCLLHETGLYPFIPGVSLSKETVLRMKEISRSPGLLPADGFWAILYLLENCSMKLPLAKEKKKRIRTIVHYVGERQNHSWNETMLYQASLSVATVVEQIRALFGQASVHEEELRQLWSSLPIQTRTELAVTGRDVMAHFQKKGGPWLADTLADIEEAVLLKHIENEKKSIIQWLEERRVES</sequence>
<reference key="1">
    <citation type="journal article" date="2000" name="Nucleic Acids Res.">
        <title>Complete genome sequence of the alkaliphilic bacterium Bacillus halodurans and genomic sequence comparison with Bacillus subtilis.</title>
        <authorList>
            <person name="Takami H."/>
            <person name="Nakasone K."/>
            <person name="Takaki Y."/>
            <person name="Maeno G."/>
            <person name="Sasaki R."/>
            <person name="Masui N."/>
            <person name="Fuji F."/>
            <person name="Hirama C."/>
            <person name="Nakamura Y."/>
            <person name="Ogasawara N."/>
            <person name="Kuhara S."/>
            <person name="Horikoshi K."/>
        </authorList>
    </citation>
    <scope>NUCLEOTIDE SEQUENCE [LARGE SCALE GENOMIC DNA]</scope>
    <source>
        <strain>ATCC BAA-125 / DSM 18197 / FERM 7344 / JCM 9153 / C-125</strain>
    </source>
</reference>
<reference key="2">
    <citation type="journal article" date="2005" name="J. Bacteriol.">
        <title>A phylogeny of bacterial RNA nucleotidyltransferases: Bacillus halodurans contains two tRNA nucleotidyltransferases.</title>
        <authorList>
            <person name="Bralley P."/>
            <person name="Chang S.A."/>
            <person name="Jones G.H."/>
        </authorList>
    </citation>
    <scope>FUNCTION</scope>
    <scope>CATALYTIC ACTIVITY</scope>
    <scope>BIOPHYSICOCHEMICAL PROPERTIES</scope>
</reference>